<reference key="1">
    <citation type="journal article" date="2004" name="DNA Res.">
        <title>Complete nucleotide sequence of the sugarcane (Saccharum officinarum) chloroplast genome: a comparative analysis of four monocot chloroplast genomes.</title>
        <authorList>
            <person name="Asano T."/>
            <person name="Tsudzuki T."/>
            <person name="Takahashi S."/>
            <person name="Shimada H."/>
            <person name="Kadowaki K."/>
        </authorList>
    </citation>
    <scope>NUCLEOTIDE SEQUENCE [LARGE SCALE GENOMIC DNA]</scope>
</reference>
<feature type="chain" id="PRO_0000226919" description="NAD(P)H-quinone oxidoreductase subunit K, chloroplastic">
    <location>
        <begin position="1"/>
        <end position="227"/>
    </location>
</feature>
<feature type="binding site" evidence="1">
    <location>
        <position position="43"/>
    </location>
    <ligand>
        <name>[4Fe-4S] cluster</name>
        <dbReference type="ChEBI" id="CHEBI:49883"/>
    </ligand>
</feature>
<feature type="binding site" evidence="1">
    <location>
        <position position="44"/>
    </location>
    <ligand>
        <name>[4Fe-4S] cluster</name>
        <dbReference type="ChEBI" id="CHEBI:49883"/>
    </ligand>
</feature>
<feature type="binding site" evidence="1">
    <location>
        <position position="108"/>
    </location>
    <ligand>
        <name>[4Fe-4S] cluster</name>
        <dbReference type="ChEBI" id="CHEBI:49883"/>
    </ligand>
</feature>
<feature type="binding site" evidence="1">
    <location>
        <position position="139"/>
    </location>
    <ligand>
        <name>[4Fe-4S] cluster</name>
        <dbReference type="ChEBI" id="CHEBI:49883"/>
    </ligand>
</feature>
<sequence length="227" mass="25481">MSLIEFPLLDQTSSNSVISTTPNDLSNWSRLSSLWPLLYGTSCCFIEFASLIGSRFDFDRYGLVPRSSPRQADLILTAGTVTMKMAPSLVRLYEQMPEPKYVIAMGACTITGGMFSTDSYSTVRGVDKLIPVDVYLPGCPPKPEAVIDALTKLRKKIAREIIEDRTLCQSQKKNRSFTTRHKLYVRRSTHTGTYEQELLYQSPSTLDISSETFFKSKSSVSSYKLVN</sequence>
<geneLocation type="chloroplast"/>
<evidence type="ECO:0000255" key="1">
    <source>
        <dbReference type="HAMAP-Rule" id="MF_01356"/>
    </source>
</evidence>
<evidence type="ECO:0000305" key="2"/>
<accession>Q6ENV9</accession>
<proteinExistence type="inferred from homology"/>
<keyword id="KW-0004">4Fe-4S</keyword>
<keyword id="KW-0150">Chloroplast</keyword>
<keyword id="KW-0408">Iron</keyword>
<keyword id="KW-0411">Iron-sulfur</keyword>
<keyword id="KW-0472">Membrane</keyword>
<keyword id="KW-0479">Metal-binding</keyword>
<keyword id="KW-0520">NAD</keyword>
<keyword id="KW-0521">NADP</keyword>
<keyword id="KW-0934">Plastid</keyword>
<keyword id="KW-0618">Plastoquinone</keyword>
<keyword id="KW-0874">Quinone</keyword>
<keyword id="KW-0793">Thylakoid</keyword>
<keyword id="KW-1278">Translocase</keyword>
<keyword id="KW-0813">Transport</keyword>
<dbReference type="EC" id="7.1.1.-" evidence="1"/>
<dbReference type="EMBL" id="AP006714">
    <property type="protein sequence ID" value="BAD27297.1"/>
    <property type="status" value="ALT_INIT"/>
    <property type="molecule type" value="Genomic_DNA"/>
</dbReference>
<dbReference type="SMR" id="Q6ENV9"/>
<dbReference type="GO" id="GO:0009535">
    <property type="term" value="C:chloroplast thylakoid membrane"/>
    <property type="evidence" value="ECO:0007669"/>
    <property type="project" value="UniProtKB-SubCell"/>
</dbReference>
<dbReference type="GO" id="GO:0045271">
    <property type="term" value="C:respiratory chain complex I"/>
    <property type="evidence" value="ECO:0007669"/>
    <property type="project" value="TreeGrafter"/>
</dbReference>
<dbReference type="GO" id="GO:0051539">
    <property type="term" value="F:4 iron, 4 sulfur cluster binding"/>
    <property type="evidence" value="ECO:0007669"/>
    <property type="project" value="UniProtKB-KW"/>
</dbReference>
<dbReference type="GO" id="GO:0005506">
    <property type="term" value="F:iron ion binding"/>
    <property type="evidence" value="ECO:0007669"/>
    <property type="project" value="UniProtKB-UniRule"/>
</dbReference>
<dbReference type="GO" id="GO:0008137">
    <property type="term" value="F:NADH dehydrogenase (ubiquinone) activity"/>
    <property type="evidence" value="ECO:0007669"/>
    <property type="project" value="InterPro"/>
</dbReference>
<dbReference type="GO" id="GO:0048038">
    <property type="term" value="F:quinone binding"/>
    <property type="evidence" value="ECO:0007669"/>
    <property type="project" value="UniProtKB-KW"/>
</dbReference>
<dbReference type="GO" id="GO:0009060">
    <property type="term" value="P:aerobic respiration"/>
    <property type="evidence" value="ECO:0007669"/>
    <property type="project" value="TreeGrafter"/>
</dbReference>
<dbReference type="GO" id="GO:0015990">
    <property type="term" value="P:electron transport coupled proton transport"/>
    <property type="evidence" value="ECO:0007669"/>
    <property type="project" value="TreeGrafter"/>
</dbReference>
<dbReference type="GO" id="GO:0019684">
    <property type="term" value="P:photosynthesis, light reaction"/>
    <property type="evidence" value="ECO:0007669"/>
    <property type="project" value="UniProtKB-UniRule"/>
</dbReference>
<dbReference type="FunFam" id="3.40.50.12280:FF:000003">
    <property type="entry name" value="NAD(P)H-quinone oxidoreductase subunit K, chloroplastic"/>
    <property type="match status" value="1"/>
</dbReference>
<dbReference type="Gene3D" id="3.40.50.12280">
    <property type="match status" value="1"/>
</dbReference>
<dbReference type="HAMAP" id="MF_01356">
    <property type="entry name" value="NDH1_NuoB"/>
    <property type="match status" value="1"/>
</dbReference>
<dbReference type="InterPro" id="IPR006137">
    <property type="entry name" value="NADH_UbQ_OxRdtase-like_20kDa"/>
</dbReference>
<dbReference type="InterPro" id="IPR006138">
    <property type="entry name" value="NADH_UQ_OxRdtase_20Kd_su"/>
</dbReference>
<dbReference type="NCBIfam" id="TIGR01957">
    <property type="entry name" value="nuoB_fam"/>
    <property type="match status" value="1"/>
</dbReference>
<dbReference type="NCBIfam" id="NF005012">
    <property type="entry name" value="PRK06411.1"/>
    <property type="match status" value="1"/>
</dbReference>
<dbReference type="PANTHER" id="PTHR11995">
    <property type="entry name" value="NADH DEHYDROGENASE"/>
    <property type="match status" value="1"/>
</dbReference>
<dbReference type="PANTHER" id="PTHR11995:SF14">
    <property type="entry name" value="NADH DEHYDROGENASE [UBIQUINONE] IRON-SULFUR PROTEIN 7, MITOCHONDRIAL"/>
    <property type="match status" value="1"/>
</dbReference>
<dbReference type="Pfam" id="PF01058">
    <property type="entry name" value="Oxidored_q6"/>
    <property type="match status" value="1"/>
</dbReference>
<dbReference type="SUPFAM" id="SSF56770">
    <property type="entry name" value="HydA/Nqo6-like"/>
    <property type="match status" value="1"/>
</dbReference>
<dbReference type="PROSITE" id="PS01150">
    <property type="entry name" value="COMPLEX1_20K"/>
    <property type="match status" value="1"/>
</dbReference>
<name>NDHK_SACOF</name>
<comment type="function">
    <text evidence="1">NDH shuttles electrons from NAD(P)H:plastoquinone, via FMN and iron-sulfur (Fe-S) centers, to quinones in the photosynthetic chain and possibly in a chloroplast respiratory chain. The immediate electron acceptor for the enzyme in this species is believed to be plastoquinone. Couples the redox reaction to proton translocation, and thus conserves the redox energy in a proton gradient.</text>
</comment>
<comment type="catalytic activity">
    <reaction evidence="1">
        <text>a plastoquinone + NADH + (n+1) H(+)(in) = a plastoquinol + NAD(+) + n H(+)(out)</text>
        <dbReference type="Rhea" id="RHEA:42608"/>
        <dbReference type="Rhea" id="RHEA-COMP:9561"/>
        <dbReference type="Rhea" id="RHEA-COMP:9562"/>
        <dbReference type="ChEBI" id="CHEBI:15378"/>
        <dbReference type="ChEBI" id="CHEBI:17757"/>
        <dbReference type="ChEBI" id="CHEBI:57540"/>
        <dbReference type="ChEBI" id="CHEBI:57945"/>
        <dbReference type="ChEBI" id="CHEBI:62192"/>
    </reaction>
</comment>
<comment type="catalytic activity">
    <reaction evidence="1">
        <text>a plastoquinone + NADPH + (n+1) H(+)(in) = a plastoquinol + NADP(+) + n H(+)(out)</text>
        <dbReference type="Rhea" id="RHEA:42612"/>
        <dbReference type="Rhea" id="RHEA-COMP:9561"/>
        <dbReference type="Rhea" id="RHEA-COMP:9562"/>
        <dbReference type="ChEBI" id="CHEBI:15378"/>
        <dbReference type="ChEBI" id="CHEBI:17757"/>
        <dbReference type="ChEBI" id="CHEBI:57783"/>
        <dbReference type="ChEBI" id="CHEBI:58349"/>
        <dbReference type="ChEBI" id="CHEBI:62192"/>
    </reaction>
</comment>
<comment type="cofactor">
    <cofactor evidence="1">
        <name>[4Fe-4S] cluster</name>
        <dbReference type="ChEBI" id="CHEBI:49883"/>
    </cofactor>
    <text evidence="1">Binds 1 [4Fe-4S] cluster.</text>
</comment>
<comment type="subunit">
    <text evidence="1">NDH is composed of at least 16 different subunits, 5 of which are encoded in the nucleus.</text>
</comment>
<comment type="subcellular location">
    <subcellularLocation>
        <location evidence="1">Plastid</location>
        <location evidence="1">Chloroplast thylakoid membrane</location>
        <topology evidence="1">Peripheral membrane protein</topology>
        <orientation evidence="1">Stromal side</orientation>
    </subcellularLocation>
</comment>
<comment type="similarity">
    <text evidence="1">Belongs to the complex I 20 kDa subunit family.</text>
</comment>
<comment type="sequence caution" evidence="2">
    <conflict type="erroneous initiation">
        <sequence resource="EMBL-CDS" id="BAD27297"/>
    </conflict>
</comment>
<organism>
    <name type="scientific">Saccharum officinarum</name>
    <name type="common">Sugarcane</name>
    <dbReference type="NCBI Taxonomy" id="4547"/>
    <lineage>
        <taxon>Eukaryota</taxon>
        <taxon>Viridiplantae</taxon>
        <taxon>Streptophyta</taxon>
        <taxon>Embryophyta</taxon>
        <taxon>Tracheophyta</taxon>
        <taxon>Spermatophyta</taxon>
        <taxon>Magnoliopsida</taxon>
        <taxon>Liliopsida</taxon>
        <taxon>Poales</taxon>
        <taxon>Poaceae</taxon>
        <taxon>PACMAD clade</taxon>
        <taxon>Panicoideae</taxon>
        <taxon>Andropogonodae</taxon>
        <taxon>Andropogoneae</taxon>
        <taxon>Saccharinae</taxon>
        <taxon>Saccharum</taxon>
        <taxon>Saccharum officinarum species complex</taxon>
    </lineage>
</organism>
<protein>
    <recommendedName>
        <fullName evidence="1">NAD(P)H-quinone oxidoreductase subunit K, chloroplastic</fullName>
        <ecNumber evidence="1">7.1.1.-</ecNumber>
    </recommendedName>
    <alternativeName>
        <fullName evidence="1">NAD(P)H dehydrogenase subunit K</fullName>
    </alternativeName>
    <alternativeName>
        <fullName evidence="1">NADH-plastoquinone oxidoreductase subunit K</fullName>
    </alternativeName>
</protein>
<gene>
    <name evidence="1" type="primary">ndhK</name>
</gene>